<gene>
    <name type="primary">FOXD1</name>
    <name type="synonym">FKHL8</name>
    <name type="synonym">FREAC4</name>
</gene>
<accession>Q16676</accession>
<accession>Q12949</accession>
<dbReference type="EMBL" id="U59831">
    <property type="protein sequence ID" value="AAC50660.1"/>
    <property type="molecule type" value="Genomic_DNA"/>
</dbReference>
<dbReference type="EMBL" id="U59832">
    <property type="protein sequence ID" value="AAC50661.1"/>
    <property type="molecule type" value="mRNA"/>
</dbReference>
<dbReference type="EMBL" id="U13222">
    <property type="protein sequence ID" value="AAA92039.1"/>
    <property type="molecule type" value="mRNA"/>
</dbReference>
<dbReference type="CCDS" id="CCDS75259.1"/>
<dbReference type="PIR" id="G02738">
    <property type="entry name" value="G02738"/>
</dbReference>
<dbReference type="PIR" id="S51627">
    <property type="entry name" value="S51627"/>
</dbReference>
<dbReference type="RefSeq" id="NP_004463.1">
    <property type="nucleotide sequence ID" value="NM_004472.3"/>
</dbReference>
<dbReference type="SMR" id="Q16676"/>
<dbReference type="BioGRID" id="108586">
    <property type="interactions" value="4"/>
</dbReference>
<dbReference type="FunCoup" id="Q16676">
    <property type="interactions" value="788"/>
</dbReference>
<dbReference type="STRING" id="9606.ENSP00000481581"/>
<dbReference type="GlyGen" id="Q16676">
    <property type="glycosylation" value="3 sites, 1 O-linked glycan (3 sites)"/>
</dbReference>
<dbReference type="iPTMnet" id="Q16676"/>
<dbReference type="PhosphoSitePlus" id="Q16676"/>
<dbReference type="BioMuta" id="FOXD1"/>
<dbReference type="DMDM" id="2494490"/>
<dbReference type="jPOST" id="Q16676"/>
<dbReference type="MassIVE" id="Q16676"/>
<dbReference type="PaxDb" id="9606-ENSP00000481581"/>
<dbReference type="PeptideAtlas" id="Q16676"/>
<dbReference type="ProteomicsDB" id="61032"/>
<dbReference type="Antibodypedia" id="62630">
    <property type="antibodies" value="206 antibodies from 22 providers"/>
</dbReference>
<dbReference type="DNASU" id="2297"/>
<dbReference type="Ensembl" id="ENST00000615637.3">
    <property type="protein sequence ID" value="ENSP00000481581.1"/>
    <property type="gene ID" value="ENSG00000251493.5"/>
</dbReference>
<dbReference type="GeneID" id="2297"/>
<dbReference type="KEGG" id="hsa:2297"/>
<dbReference type="MANE-Select" id="ENST00000615637.3">
    <property type="protein sequence ID" value="ENSP00000481581.1"/>
    <property type="RefSeq nucleotide sequence ID" value="NM_004472.3"/>
    <property type="RefSeq protein sequence ID" value="NP_004463.1"/>
</dbReference>
<dbReference type="UCSC" id="uc032uyj.2">
    <property type="organism name" value="human"/>
</dbReference>
<dbReference type="AGR" id="HGNC:3802"/>
<dbReference type="CTD" id="2297"/>
<dbReference type="DisGeNET" id="2297"/>
<dbReference type="GeneCards" id="FOXD1"/>
<dbReference type="HGNC" id="HGNC:3802">
    <property type="gene designation" value="FOXD1"/>
</dbReference>
<dbReference type="HPA" id="ENSG00000251493">
    <property type="expression patterns" value="Low tissue specificity"/>
</dbReference>
<dbReference type="MIM" id="601091">
    <property type="type" value="gene"/>
</dbReference>
<dbReference type="neXtProt" id="NX_Q16676"/>
<dbReference type="OpenTargets" id="ENSG00000251493"/>
<dbReference type="PharmGKB" id="PA28219"/>
<dbReference type="VEuPathDB" id="HostDB:ENSG00000251493"/>
<dbReference type="eggNOG" id="KOG2294">
    <property type="taxonomic scope" value="Eukaryota"/>
</dbReference>
<dbReference type="GeneTree" id="ENSGT00940000161645"/>
<dbReference type="HOGENOM" id="CLU_040357_5_1_1"/>
<dbReference type="InParanoid" id="Q16676"/>
<dbReference type="OMA" id="REHNGFL"/>
<dbReference type="OrthoDB" id="5402974at2759"/>
<dbReference type="PAN-GO" id="Q16676">
    <property type="GO annotations" value="5 GO annotations based on evolutionary models"/>
</dbReference>
<dbReference type="PathwayCommons" id="Q16676"/>
<dbReference type="SignaLink" id="Q16676"/>
<dbReference type="BioGRID-ORCS" id="2297">
    <property type="hits" value="29 hits in 422 CRISPR screens"/>
</dbReference>
<dbReference type="ChiTaRS" id="FOXD1">
    <property type="organism name" value="human"/>
</dbReference>
<dbReference type="GenomeRNAi" id="2297"/>
<dbReference type="Pharos" id="Q16676">
    <property type="development level" value="Tbio"/>
</dbReference>
<dbReference type="PRO" id="PR:Q16676"/>
<dbReference type="Proteomes" id="UP000005640">
    <property type="component" value="Chromosome 5"/>
</dbReference>
<dbReference type="RNAct" id="Q16676">
    <property type="molecule type" value="protein"/>
</dbReference>
<dbReference type="Bgee" id="ENSG00000251493">
    <property type="expression patterns" value="Expressed in tibia and 113 other cell types or tissues"/>
</dbReference>
<dbReference type="GO" id="GO:0000785">
    <property type="term" value="C:chromatin"/>
    <property type="evidence" value="ECO:0000247"/>
    <property type="project" value="NTNU_SB"/>
</dbReference>
<dbReference type="GO" id="GO:0005634">
    <property type="term" value="C:nucleus"/>
    <property type="evidence" value="ECO:0000305"/>
    <property type="project" value="UniProtKB"/>
</dbReference>
<dbReference type="GO" id="GO:0003677">
    <property type="term" value="F:DNA binding"/>
    <property type="evidence" value="ECO:0000314"/>
    <property type="project" value="MGI"/>
</dbReference>
<dbReference type="GO" id="GO:0008301">
    <property type="term" value="F:DNA binding, bending"/>
    <property type="evidence" value="ECO:0000314"/>
    <property type="project" value="UniProtKB"/>
</dbReference>
<dbReference type="GO" id="GO:0001228">
    <property type="term" value="F:DNA-binding transcription activator activity, RNA polymerase II-specific"/>
    <property type="evidence" value="ECO:0007669"/>
    <property type="project" value="Ensembl"/>
</dbReference>
<dbReference type="GO" id="GO:0003700">
    <property type="term" value="F:DNA-binding transcription factor activity"/>
    <property type="evidence" value="ECO:0000304"/>
    <property type="project" value="ProtInc"/>
</dbReference>
<dbReference type="GO" id="GO:0000981">
    <property type="term" value="F:DNA-binding transcription factor activity, RNA polymerase II-specific"/>
    <property type="evidence" value="ECO:0000247"/>
    <property type="project" value="NTNU_SB"/>
</dbReference>
<dbReference type="GO" id="GO:0000978">
    <property type="term" value="F:RNA polymerase II cis-regulatory region sequence-specific DNA binding"/>
    <property type="evidence" value="ECO:0000318"/>
    <property type="project" value="GO_Central"/>
</dbReference>
<dbReference type="GO" id="GO:0043565">
    <property type="term" value="F:sequence-specific DNA binding"/>
    <property type="evidence" value="ECO:0000314"/>
    <property type="project" value="UniProtKB"/>
</dbReference>
<dbReference type="GO" id="GO:0009653">
    <property type="term" value="P:anatomical structure morphogenesis"/>
    <property type="evidence" value="ECO:0000318"/>
    <property type="project" value="GO_Central"/>
</dbReference>
<dbReference type="GO" id="GO:0007411">
    <property type="term" value="P:axon guidance"/>
    <property type="evidence" value="ECO:0007669"/>
    <property type="project" value="Ensembl"/>
</dbReference>
<dbReference type="GO" id="GO:0060070">
    <property type="term" value="P:canonical Wnt signaling pathway"/>
    <property type="evidence" value="ECO:0007669"/>
    <property type="project" value="Ensembl"/>
</dbReference>
<dbReference type="GO" id="GO:0030154">
    <property type="term" value="P:cell differentiation"/>
    <property type="evidence" value="ECO:0000318"/>
    <property type="project" value="GO_Central"/>
</dbReference>
<dbReference type="GO" id="GO:0060678">
    <property type="term" value="P:dichotomous subdivision of terminal units involved in ureteric bud branching"/>
    <property type="evidence" value="ECO:0000250"/>
    <property type="project" value="UniProtKB"/>
</dbReference>
<dbReference type="GO" id="GO:0032275">
    <property type="term" value="P:luteinizing hormone secretion"/>
    <property type="evidence" value="ECO:0007669"/>
    <property type="project" value="Ensembl"/>
</dbReference>
<dbReference type="GO" id="GO:0072213">
    <property type="term" value="P:metanephric capsule development"/>
    <property type="evidence" value="ECO:0000250"/>
    <property type="project" value="UniProtKB"/>
</dbReference>
<dbReference type="GO" id="GO:0072267">
    <property type="term" value="P:metanephric capsule specification"/>
    <property type="evidence" value="ECO:0000250"/>
    <property type="project" value="UniProtKB"/>
</dbReference>
<dbReference type="GO" id="GO:0072210">
    <property type="term" value="P:metanephric nephron development"/>
    <property type="evidence" value="ECO:0007669"/>
    <property type="project" value="Ensembl"/>
</dbReference>
<dbReference type="GO" id="GO:0045892">
    <property type="term" value="P:negative regulation of DNA-templated transcription"/>
    <property type="evidence" value="ECO:0000250"/>
    <property type="project" value="UniProtKB"/>
</dbReference>
<dbReference type="GO" id="GO:0072076">
    <property type="term" value="P:nephrogenic mesenchyme development"/>
    <property type="evidence" value="ECO:0007669"/>
    <property type="project" value="Ensembl"/>
</dbReference>
<dbReference type="GO" id="GO:0030513">
    <property type="term" value="P:positive regulation of BMP signaling pathway"/>
    <property type="evidence" value="ECO:0000250"/>
    <property type="project" value="UniProtKB"/>
</dbReference>
<dbReference type="GO" id="GO:0010628">
    <property type="term" value="P:positive regulation of gene expression"/>
    <property type="evidence" value="ECO:0000250"/>
    <property type="project" value="UniProtKB"/>
</dbReference>
<dbReference type="GO" id="GO:0090184">
    <property type="term" value="P:positive regulation of kidney development"/>
    <property type="evidence" value="ECO:0000250"/>
    <property type="project" value="UniProtKB"/>
</dbReference>
<dbReference type="GO" id="GO:0006357">
    <property type="term" value="P:regulation of transcription by RNA polymerase II"/>
    <property type="evidence" value="ECO:0000318"/>
    <property type="project" value="GO_Central"/>
</dbReference>
<dbReference type="CDD" id="cd20046">
    <property type="entry name" value="FH_FOXD1_D2-like"/>
    <property type="match status" value="1"/>
</dbReference>
<dbReference type="FunFam" id="1.10.10.10:FF:000016">
    <property type="entry name" value="Forkhead box protein I1"/>
    <property type="match status" value="1"/>
</dbReference>
<dbReference type="Gene3D" id="1.10.10.10">
    <property type="entry name" value="Winged helix-like DNA-binding domain superfamily/Winged helix DNA-binding domain"/>
    <property type="match status" value="1"/>
</dbReference>
<dbReference type="InterPro" id="IPR001766">
    <property type="entry name" value="Fork_head_dom"/>
</dbReference>
<dbReference type="InterPro" id="IPR050211">
    <property type="entry name" value="FOX_domain-containing"/>
</dbReference>
<dbReference type="InterPro" id="IPR018122">
    <property type="entry name" value="TF_fork_head_CS_1"/>
</dbReference>
<dbReference type="InterPro" id="IPR030456">
    <property type="entry name" value="TF_fork_head_CS_2"/>
</dbReference>
<dbReference type="InterPro" id="IPR036388">
    <property type="entry name" value="WH-like_DNA-bd_sf"/>
</dbReference>
<dbReference type="InterPro" id="IPR036390">
    <property type="entry name" value="WH_DNA-bd_sf"/>
</dbReference>
<dbReference type="PANTHER" id="PTHR11829">
    <property type="entry name" value="FORKHEAD BOX PROTEIN"/>
    <property type="match status" value="1"/>
</dbReference>
<dbReference type="PANTHER" id="PTHR11829:SF348">
    <property type="entry name" value="FORKHEAD BOX PROTEIN D1"/>
    <property type="match status" value="1"/>
</dbReference>
<dbReference type="Pfam" id="PF00250">
    <property type="entry name" value="Forkhead"/>
    <property type="match status" value="1"/>
</dbReference>
<dbReference type="PRINTS" id="PR00053">
    <property type="entry name" value="FORKHEAD"/>
</dbReference>
<dbReference type="SMART" id="SM00339">
    <property type="entry name" value="FH"/>
    <property type="match status" value="1"/>
</dbReference>
<dbReference type="SUPFAM" id="SSF46785">
    <property type="entry name" value="Winged helix' DNA-binding domain"/>
    <property type="match status" value="1"/>
</dbReference>
<dbReference type="PROSITE" id="PS00657">
    <property type="entry name" value="FORK_HEAD_1"/>
    <property type="match status" value="1"/>
</dbReference>
<dbReference type="PROSITE" id="PS00658">
    <property type="entry name" value="FORK_HEAD_2"/>
    <property type="match status" value="1"/>
</dbReference>
<dbReference type="PROSITE" id="PS50039">
    <property type="entry name" value="FORK_HEAD_3"/>
    <property type="match status" value="1"/>
</dbReference>
<comment type="function">
    <text evidence="1 4">Transcription factor involved in regulation of gene expression in a variety of processes, including formation of positional identity in the developing retina, regionalization of the optic chiasm, morphogenesis of the kidney, and neuralization of ectodermal cells (By similarity). Involved in transcriptional activation of PGF and C3 genes (PubMed:27805902).</text>
</comment>
<comment type="subcellular location">
    <subcellularLocation>
        <location>Nucleus</location>
    </subcellularLocation>
</comment>
<keyword id="KW-0238">DNA-binding</keyword>
<keyword id="KW-0539">Nucleus</keyword>
<keyword id="KW-1267">Proteomics identification</keyword>
<keyword id="KW-1185">Reference proteome</keyword>
<keyword id="KW-0804">Transcription</keyword>
<keyword id="KW-0805">Transcription regulation</keyword>
<protein>
    <recommendedName>
        <fullName>Forkhead box protein D1</fullName>
    </recommendedName>
    <alternativeName>
        <fullName>Forkhead-related protein FKHL8</fullName>
    </alternativeName>
    <alternativeName>
        <fullName>Forkhead-related transcription factor 4</fullName>
        <shortName>FREAC-4</shortName>
    </alternativeName>
</protein>
<feature type="chain" id="PRO_0000091811" description="Forkhead box protein D1">
    <location>
        <begin position="1"/>
        <end position="465"/>
    </location>
</feature>
<feature type="DNA-binding region" description="Fork-head" evidence="2">
    <location>
        <begin position="124"/>
        <end position="215"/>
    </location>
</feature>
<feature type="region of interest" description="Disordered" evidence="3">
    <location>
        <begin position="1"/>
        <end position="117"/>
    </location>
</feature>
<feature type="region of interest" description="Disordered" evidence="3">
    <location>
        <begin position="391"/>
        <end position="410"/>
    </location>
</feature>
<feature type="compositionally biased region" description="Acidic residues" evidence="3">
    <location>
        <begin position="15"/>
        <end position="39"/>
    </location>
</feature>
<feature type="compositionally biased region" description="Acidic residues" evidence="3">
    <location>
        <begin position="61"/>
        <end position="77"/>
    </location>
</feature>
<feature type="compositionally biased region" description="Gly residues" evidence="3">
    <location>
        <begin position="98"/>
        <end position="116"/>
    </location>
</feature>
<feature type="compositionally biased region" description="Pro residues" evidence="3">
    <location>
        <begin position="393"/>
        <end position="403"/>
    </location>
</feature>
<feature type="sequence variant" id="VAR_077596" description="In dbSNP:rs775281482." evidence="4">
    <original>R</original>
    <variation>P</variation>
    <location>
        <position position="55"/>
    </location>
</feature>
<feature type="sequence variant" id="VAR_077597" description="In dbSNP:rs7705335." evidence="4">
    <original>A</original>
    <variation>G</variation>
    <location>
        <position position="88"/>
    </location>
</feature>
<feature type="sequence variant" id="VAR_077598" description="In dbSNP:rs562222810." evidence="4">
    <original>P</original>
    <variation>L</variation>
    <location>
        <position position="228"/>
    </location>
</feature>
<feature type="sequence variant" id="VAR_077599" description="In dbSNP:rs552595262." evidence="4">
    <original>A</original>
    <variation>T</variation>
    <location>
        <position position="326"/>
    </location>
</feature>
<feature type="sequence variant" id="VAR_077600" description="In dbSNP:rs1039708369." evidence="4">
    <original>A</original>
    <variation>V</variation>
    <location>
        <position position="336"/>
    </location>
</feature>
<feature type="sequence variant" id="VAR_077601" description="In dbSNP:rs951256776." evidence="4">
    <original>P</original>
    <variation>R</variation>
    <location>
        <position position="352"/>
    </location>
</feature>
<feature type="sequence variant" id="VAR_077602" description="Decreased activation of transcription from PGF and C3 promoters; dbSNP:rs917127030." evidence="4">
    <original>A</original>
    <variation>G</variation>
    <location>
        <position position="356"/>
    </location>
</feature>
<feature type="sequence variant" id="VAR_077603" description="Increased activation of transcription from the C3 promoter but no effect on the PGF promoter; dbSNP:rs992724147." evidence="4">
    <original>I</original>
    <variation>M</variation>
    <location>
        <position position="364"/>
    </location>
</feature>
<feature type="sequence variant" id="VAR_077604" evidence="4">
    <location>
        <begin position="383"/>
        <end position="387"/>
    </location>
</feature>
<feature type="sequence variant" id="VAR_077605" description="In dbSNP:rs540644822." evidence="4">
    <original>P</original>
    <variation>L</variation>
    <location>
        <position position="396"/>
    </location>
</feature>
<feature type="sequence variant" id="VAR_077606" evidence="4">
    <original>V</original>
    <variation>I</variation>
    <location>
        <position position="437"/>
    </location>
</feature>
<feature type="sequence variant" id="VAR_077607" evidence="4">
    <original>A</original>
    <variation>S</variation>
    <location>
        <position position="442"/>
    </location>
</feature>
<evidence type="ECO:0000250" key="1">
    <source>
        <dbReference type="UniProtKB" id="Q61345"/>
    </source>
</evidence>
<evidence type="ECO:0000255" key="2">
    <source>
        <dbReference type="PROSITE-ProRule" id="PRU00089"/>
    </source>
</evidence>
<evidence type="ECO:0000256" key="3">
    <source>
        <dbReference type="SAM" id="MobiDB-lite"/>
    </source>
</evidence>
<evidence type="ECO:0000269" key="4">
    <source>
    </source>
</evidence>
<name>FOXD1_HUMAN</name>
<sequence length="465" mass="46140">MTLSTEMSDASGLAEETDIDVVGEGEDEEDEEEEDDDEGGGGGPRLAVPAQRRRRRRSYAGEDELEDLEEEEDDDDILLAPPAGGSPAPPGPAPAAGAGAGGGGGGGGAGGGGSAGSGAKNPLVKPPYSYIALITMAILQSPKKRLTLSEICEFISGRFPYYREKFPAWQNSIRHNLSLNDCFVKIPREPGNPGKGNYWTLDPESADMFDNGSFLRRRKRFKRQPLLPPNAAAAESLLLRGAGAAGGAGDPAAAAALFPPAPPPPPHAYGYGPYGCGYGLQLPPYAPPSALFAAAAAAAAAAAFHPHSPPPPPPPHGAAAELARTAFGYRPHPLGAALPGPLPASAAKAGGPGASALARSPFSIESIIGGSLGPAAAAAAAAQAAAAAQASPSPSPVAAPPAPGSSGGGCAAQAAVGPAAALTRSLVAAAAAAASSVSSSAALGTLHQGTALSSVENFTARISNC</sequence>
<proteinExistence type="evidence at protein level"/>
<reference key="1">
    <citation type="journal article" date="1996" name="J. Biol. Chem.">
        <title>Characterization of the human forkhead gene FREAC-4. Evidence for regulation by Wilms' tumor suppressor gene (WT-1) and p53.</title>
        <authorList>
            <person name="Ernstsson S."/>
            <person name="Pierrou S."/>
            <person name="Hulander M."/>
            <person name="Cederberg A."/>
            <person name="Hellqvist M."/>
            <person name="Carlsson P."/>
            <person name="Enerbaeck S."/>
        </authorList>
    </citation>
    <scope>NUCLEOTIDE SEQUENCE [GENOMIC DNA / MRNA]</scope>
</reference>
<reference key="2">
    <citation type="journal article" date="1994" name="EMBO J.">
        <title>Cloning and characterization of seven human forkhead proteins: binding site specificity and DNA bending.</title>
        <authorList>
            <person name="Pierrou S."/>
            <person name="Hellqvist M."/>
            <person name="Samuelsson L."/>
            <person name="Enerbaeck S."/>
            <person name="Carlsson P."/>
        </authorList>
    </citation>
    <scope>NUCLEOTIDE SEQUENCE [MRNA] OF 120-225</scope>
</reference>
<reference key="3">
    <citation type="journal article" date="2016" name="Open Biol.">
        <title>Association of FOXD1 variants with adverse pregnancy outcomes in mice and humans.</title>
        <authorList>
            <person name="Laissue P."/>
            <person name="Lakhal B."/>
            <person name="Vatin M."/>
            <person name="Batista F."/>
            <person name="Burgio G."/>
            <person name="Mercier E."/>
            <person name="Santos E.D."/>
            <person name="Buffat C."/>
            <person name="Sierra-Diaz D.C."/>
            <person name="Renault G."/>
            <person name="Montagutelli X."/>
            <person name="Salmon J."/>
            <person name="Monget P."/>
            <person name="Veitia R.A."/>
            <person name="Mehats C."/>
            <person name="Fellous M."/>
            <person name="Gris J.C."/>
            <person name="Cocquet J."/>
            <person name="Vaiman D."/>
        </authorList>
    </citation>
    <scope>FUNCTION</scope>
    <scope>VARIANTS PRO-55; GLY-88; LEU-228; THR-326; VAL-336; ARG-352; GLY-356; MET-364; 383-GLN--ALA-387 DEL; LEU-396; ILE-437 AND SER-442</scope>
    <scope>CHARACTERIZATION OF VARIANTS GLY-356 AND MET-364</scope>
</reference>
<organism>
    <name type="scientific">Homo sapiens</name>
    <name type="common">Human</name>
    <dbReference type="NCBI Taxonomy" id="9606"/>
    <lineage>
        <taxon>Eukaryota</taxon>
        <taxon>Metazoa</taxon>
        <taxon>Chordata</taxon>
        <taxon>Craniata</taxon>
        <taxon>Vertebrata</taxon>
        <taxon>Euteleostomi</taxon>
        <taxon>Mammalia</taxon>
        <taxon>Eutheria</taxon>
        <taxon>Euarchontoglires</taxon>
        <taxon>Primates</taxon>
        <taxon>Haplorrhini</taxon>
        <taxon>Catarrhini</taxon>
        <taxon>Hominidae</taxon>
        <taxon>Homo</taxon>
    </lineage>
</organism>